<keyword id="KW-0010">Activator</keyword>
<keyword id="KW-0963">Cytoplasm</keyword>
<keyword id="KW-1185">Reference proteome</keyword>
<keyword id="KW-0678">Repressor</keyword>
<keyword id="KW-0694">RNA-binding</keyword>
<keyword id="KW-0810">Translation regulation</keyword>
<comment type="function">
    <text evidence="1">A key translational regulator that binds mRNA to regulate translation initiation and/or mRNA stability. Mediates global changes in gene expression, shifting from rapid growth to stress survival by linking envelope stress, the stringent response and the catabolite repression systems. Usually binds in the 5'-UTR; binding at or near the Shine-Dalgarno sequence prevents ribosome-binding, repressing translation, binding elsewhere in the 5'-UTR can activate translation and/or stabilize the mRNA. Its function is antagonized by small RNA(s).</text>
</comment>
<comment type="subunit">
    <text evidence="1">Homodimer; the beta-strands of each monomer intercalate to form a hydrophobic core, while the alpha-helices form wings that extend away from the core.</text>
</comment>
<comment type="subcellular location">
    <subcellularLocation>
        <location evidence="1">Cytoplasm</location>
    </subcellularLocation>
</comment>
<comment type="similarity">
    <text evidence="1">Belongs to the CsrA/RsmA family.</text>
</comment>
<protein>
    <recommendedName>
        <fullName evidence="1">Translational regulator CsrA</fullName>
    </recommendedName>
    <alternativeName>
        <fullName evidence="1">Carbon storage regulator</fullName>
    </alternativeName>
</protein>
<proteinExistence type="inferred from homology"/>
<dbReference type="EMBL" id="BX571863">
    <property type="protein sequence ID" value="CAE13545.1"/>
    <property type="molecule type" value="Genomic_DNA"/>
</dbReference>
<dbReference type="RefSeq" id="WP_002209449.1">
    <property type="nucleotide sequence ID" value="NC_005126.1"/>
</dbReference>
<dbReference type="SMR" id="P63875"/>
<dbReference type="STRING" id="243265.plu1251"/>
<dbReference type="GeneID" id="97457422"/>
<dbReference type="KEGG" id="plu:plu1251"/>
<dbReference type="eggNOG" id="COG1551">
    <property type="taxonomic scope" value="Bacteria"/>
</dbReference>
<dbReference type="HOGENOM" id="CLU_164837_2_1_6"/>
<dbReference type="OrthoDB" id="9809061at2"/>
<dbReference type="Proteomes" id="UP000002514">
    <property type="component" value="Chromosome"/>
</dbReference>
<dbReference type="GO" id="GO:0005829">
    <property type="term" value="C:cytosol"/>
    <property type="evidence" value="ECO:0007669"/>
    <property type="project" value="TreeGrafter"/>
</dbReference>
<dbReference type="GO" id="GO:0048027">
    <property type="term" value="F:mRNA 5'-UTR binding"/>
    <property type="evidence" value="ECO:0007669"/>
    <property type="project" value="UniProtKB-UniRule"/>
</dbReference>
<dbReference type="GO" id="GO:0006402">
    <property type="term" value="P:mRNA catabolic process"/>
    <property type="evidence" value="ECO:0007669"/>
    <property type="project" value="InterPro"/>
</dbReference>
<dbReference type="GO" id="GO:0045947">
    <property type="term" value="P:negative regulation of translational initiation"/>
    <property type="evidence" value="ECO:0007669"/>
    <property type="project" value="UniProtKB-UniRule"/>
</dbReference>
<dbReference type="GO" id="GO:0045948">
    <property type="term" value="P:positive regulation of translational initiation"/>
    <property type="evidence" value="ECO:0007669"/>
    <property type="project" value="UniProtKB-UniRule"/>
</dbReference>
<dbReference type="GO" id="GO:0006109">
    <property type="term" value="P:regulation of carbohydrate metabolic process"/>
    <property type="evidence" value="ECO:0007669"/>
    <property type="project" value="UniProtKB-UniRule"/>
</dbReference>
<dbReference type="FunFam" id="2.60.40.4380:FF:000001">
    <property type="entry name" value="Translational regulator CsrA"/>
    <property type="match status" value="1"/>
</dbReference>
<dbReference type="Gene3D" id="2.60.40.4380">
    <property type="entry name" value="Translational regulator CsrA"/>
    <property type="match status" value="1"/>
</dbReference>
<dbReference type="HAMAP" id="MF_00167">
    <property type="entry name" value="CsrA"/>
    <property type="match status" value="1"/>
</dbReference>
<dbReference type="InterPro" id="IPR003751">
    <property type="entry name" value="CsrA"/>
</dbReference>
<dbReference type="InterPro" id="IPR036107">
    <property type="entry name" value="CsrA_sf"/>
</dbReference>
<dbReference type="NCBIfam" id="TIGR00202">
    <property type="entry name" value="csrA"/>
    <property type="match status" value="1"/>
</dbReference>
<dbReference type="NCBIfam" id="NF002469">
    <property type="entry name" value="PRK01712.1"/>
    <property type="match status" value="1"/>
</dbReference>
<dbReference type="PANTHER" id="PTHR34984">
    <property type="entry name" value="CARBON STORAGE REGULATOR"/>
    <property type="match status" value="1"/>
</dbReference>
<dbReference type="PANTHER" id="PTHR34984:SF1">
    <property type="entry name" value="CARBON STORAGE REGULATOR"/>
    <property type="match status" value="1"/>
</dbReference>
<dbReference type="Pfam" id="PF02599">
    <property type="entry name" value="CsrA"/>
    <property type="match status" value="1"/>
</dbReference>
<dbReference type="SUPFAM" id="SSF117130">
    <property type="entry name" value="CsrA-like"/>
    <property type="match status" value="1"/>
</dbReference>
<gene>
    <name evidence="1" type="primary">csrA</name>
    <name type="ordered locus">plu1251</name>
</gene>
<name>CSRA_PHOLL</name>
<reference key="1">
    <citation type="journal article" date="2003" name="Nat. Biotechnol.">
        <title>The genome sequence of the entomopathogenic bacterium Photorhabdus luminescens.</title>
        <authorList>
            <person name="Duchaud E."/>
            <person name="Rusniok C."/>
            <person name="Frangeul L."/>
            <person name="Buchrieser C."/>
            <person name="Givaudan A."/>
            <person name="Taourit S."/>
            <person name="Bocs S."/>
            <person name="Boursaux-Eude C."/>
            <person name="Chandler M."/>
            <person name="Charles J.-F."/>
            <person name="Dassa E."/>
            <person name="Derose R."/>
            <person name="Derzelle S."/>
            <person name="Freyssinet G."/>
            <person name="Gaudriault S."/>
            <person name="Medigue C."/>
            <person name="Lanois A."/>
            <person name="Powell K."/>
            <person name="Siguier P."/>
            <person name="Vincent R."/>
            <person name="Wingate V."/>
            <person name="Zouine M."/>
            <person name="Glaser P."/>
            <person name="Boemare N."/>
            <person name="Danchin A."/>
            <person name="Kunst F."/>
        </authorList>
    </citation>
    <scope>NUCLEOTIDE SEQUENCE [LARGE SCALE GENOMIC DNA]</scope>
    <source>
        <strain>DSM 15139 / CIP 105565 / TT01</strain>
    </source>
</reference>
<feature type="chain" id="PRO_0000177077" description="Translational regulator CsrA">
    <location>
        <begin position="1"/>
        <end position="61"/>
    </location>
</feature>
<evidence type="ECO:0000255" key="1">
    <source>
        <dbReference type="HAMAP-Rule" id="MF_00167"/>
    </source>
</evidence>
<sequence length="61" mass="6853">MLILTRRVGETLMIGDEVTVTVLGVKGNQVRIGVNAPKEVSVHREEIYQRIQAEKSQPTTY</sequence>
<accession>P63875</accession>
<accession>Q8ZBT9</accession>
<organism>
    <name type="scientific">Photorhabdus laumondii subsp. laumondii (strain DSM 15139 / CIP 105565 / TT01)</name>
    <name type="common">Photorhabdus luminescens subsp. laumondii</name>
    <dbReference type="NCBI Taxonomy" id="243265"/>
    <lineage>
        <taxon>Bacteria</taxon>
        <taxon>Pseudomonadati</taxon>
        <taxon>Pseudomonadota</taxon>
        <taxon>Gammaproteobacteria</taxon>
        <taxon>Enterobacterales</taxon>
        <taxon>Morganellaceae</taxon>
        <taxon>Photorhabdus</taxon>
    </lineage>
</organism>